<keyword id="KW-0489">Methyltransferase</keyword>
<keyword id="KW-1185">Reference proteome</keyword>
<keyword id="KW-0949">S-adenosyl-L-methionine</keyword>
<keyword id="KW-0808">Transferase</keyword>
<feature type="chain" id="PRO_0000361129" description="Putative S-adenosyl-L-methionine-dependent methyltransferase MAB_4607c">
    <location>
        <begin position="1"/>
        <end position="305"/>
    </location>
</feature>
<feature type="binding site" evidence="1">
    <location>
        <position position="128"/>
    </location>
    <ligand>
        <name>S-adenosyl-L-methionine</name>
        <dbReference type="ChEBI" id="CHEBI:59789"/>
    </ligand>
</feature>
<feature type="binding site" evidence="1">
    <location>
        <begin position="155"/>
        <end position="156"/>
    </location>
    <ligand>
        <name>S-adenosyl-L-methionine</name>
        <dbReference type="ChEBI" id="CHEBI:59789"/>
    </ligand>
</feature>
<proteinExistence type="inferred from homology"/>
<name>Y4607_MYCA9</name>
<accession>B1ML31</accession>
<protein>
    <recommendedName>
        <fullName>Putative S-adenosyl-L-methionine-dependent methyltransferase MAB_4607c</fullName>
        <ecNumber>2.1.1.-</ecNumber>
    </recommendedName>
</protein>
<comment type="function">
    <text evidence="1">Exhibits S-adenosyl-L-methionine-dependent methyltransferase activity.</text>
</comment>
<comment type="similarity">
    <text evidence="2">Belongs to the UPF0677 family.</text>
</comment>
<organism>
    <name type="scientific">Mycobacteroides abscessus (strain ATCC 19977 / DSM 44196 / CCUG 20993 / CIP 104536 / JCM 13569 / NCTC 13031 / TMC 1543 / L948)</name>
    <name type="common">Mycobacterium abscessus</name>
    <dbReference type="NCBI Taxonomy" id="561007"/>
    <lineage>
        <taxon>Bacteria</taxon>
        <taxon>Bacillati</taxon>
        <taxon>Actinomycetota</taxon>
        <taxon>Actinomycetes</taxon>
        <taxon>Mycobacteriales</taxon>
        <taxon>Mycobacteriaceae</taxon>
        <taxon>Mycobacteroides</taxon>
        <taxon>Mycobacteroides abscessus</taxon>
    </lineage>
</organism>
<dbReference type="EC" id="2.1.1.-"/>
<dbReference type="EMBL" id="CU458896">
    <property type="protein sequence ID" value="CAM64676.1"/>
    <property type="molecule type" value="Genomic_DNA"/>
</dbReference>
<dbReference type="RefSeq" id="WP_005079747.1">
    <property type="nucleotide sequence ID" value="NZ_MLCG01000001.1"/>
</dbReference>
<dbReference type="SMR" id="B1ML31"/>
<dbReference type="GeneID" id="93381551"/>
<dbReference type="KEGG" id="mab:MAB_4607c"/>
<dbReference type="Proteomes" id="UP000007137">
    <property type="component" value="Chromosome"/>
</dbReference>
<dbReference type="GO" id="GO:0008168">
    <property type="term" value="F:methyltransferase activity"/>
    <property type="evidence" value="ECO:0007669"/>
    <property type="project" value="UniProtKB-KW"/>
</dbReference>
<dbReference type="GO" id="GO:0032259">
    <property type="term" value="P:methylation"/>
    <property type="evidence" value="ECO:0007669"/>
    <property type="project" value="UniProtKB-KW"/>
</dbReference>
<dbReference type="Gene3D" id="3.40.50.150">
    <property type="entry name" value="Vaccinia Virus protein VP39"/>
    <property type="match status" value="1"/>
</dbReference>
<dbReference type="InterPro" id="IPR007213">
    <property type="entry name" value="Ppm1/Ppm2/Tcmp"/>
</dbReference>
<dbReference type="InterPro" id="IPR029063">
    <property type="entry name" value="SAM-dependent_MTases_sf"/>
</dbReference>
<dbReference type="InterPro" id="IPR011610">
    <property type="entry name" value="SAM_mthyl_Trfase_ML2640-like"/>
</dbReference>
<dbReference type="NCBIfam" id="TIGR00027">
    <property type="entry name" value="mthyl_TIGR00027"/>
    <property type="match status" value="1"/>
</dbReference>
<dbReference type="PANTHER" id="PTHR43619">
    <property type="entry name" value="S-ADENOSYL-L-METHIONINE-DEPENDENT METHYLTRANSFERASE YKTD-RELATED"/>
    <property type="match status" value="1"/>
</dbReference>
<dbReference type="PANTHER" id="PTHR43619:SF2">
    <property type="entry name" value="S-ADENOSYL-L-METHIONINE-DEPENDENT METHYLTRANSFERASES SUPERFAMILY PROTEIN"/>
    <property type="match status" value="1"/>
</dbReference>
<dbReference type="Pfam" id="PF04072">
    <property type="entry name" value="LCM"/>
    <property type="match status" value="1"/>
</dbReference>
<dbReference type="SUPFAM" id="SSF53335">
    <property type="entry name" value="S-adenosyl-L-methionine-dependent methyltransferases"/>
    <property type="match status" value="1"/>
</dbReference>
<evidence type="ECO:0000250" key="1"/>
<evidence type="ECO:0000305" key="2"/>
<gene>
    <name type="ordered locus">MAB_4607c</name>
</gene>
<sequence length="305" mass="33499">MRVDGDTWDITSSVGATALGVAAARATETLRADALIRDPFAQILVDATGKATGWERLVAGDIDWPDPEAGRIYDRMVDYQATRTHFFDEYFLAAAAAGIRQVVILASGLDSRAYRLDWPAGTTVYEIDQPQVLKFKDSALAAHQPTAQRRGVAIDLREDWPAALRAAGFDSAQPTAWLAEGLLPYLPADAQDNLFRDIGVLSAAGSRVAVEGYEGKLVLDESEEEAVRREQVRAAFKTAIDVDVTIENLIYEDENRADPAEWLDAHGWSVTKTDAHDEMARLGRPVAEDVERGTFRGQLIQGELR</sequence>
<reference key="1">
    <citation type="journal article" date="2009" name="PLoS ONE">
        <title>Non mycobacterial virulence genes in the genome of the emerging pathogen Mycobacterium abscessus.</title>
        <authorList>
            <person name="Ripoll F."/>
            <person name="Pasek S."/>
            <person name="Schenowitz C."/>
            <person name="Dossat C."/>
            <person name="Barbe V."/>
            <person name="Rottman M."/>
            <person name="Macheras E."/>
            <person name="Heym B."/>
            <person name="Herrmann J.L."/>
            <person name="Daffe M."/>
            <person name="Brosch R."/>
            <person name="Risler J.L."/>
            <person name="Gaillard J.L."/>
        </authorList>
    </citation>
    <scope>NUCLEOTIDE SEQUENCE [LARGE SCALE GENOMIC DNA]</scope>
    <source>
        <strain>ATCC 19977 / DSM 44196 / CCUG 20993 / CIP 104536 / JCM 13569 / NCTC 13031 / TMC 1543 / L948</strain>
    </source>
</reference>